<name>MAT1_FUSOX</name>
<keyword id="KW-0238">DNA-binding</keyword>
<keyword id="KW-0539">Nucleus</keyword>
<keyword id="KW-0804">Transcription</keyword>
<keyword id="KW-0805">Transcription regulation</keyword>
<protein>
    <recommendedName>
        <fullName>Mating-type protein MAT-1</fullName>
    </recommendedName>
</protein>
<comment type="function">
    <text evidence="1">Mating type proteins are sequence specific DNA-binding proteins that act as master switches in fungal differentiation by controlling gene expression in a cell type-specific fashion. Transcriptional activator that induces the transcription of alpha-specific genes.</text>
</comment>
<comment type="subcellular location">
    <subcellularLocation>
        <location evidence="2">Nucleus</location>
    </subcellularLocation>
</comment>
<comment type="similarity">
    <text evidence="2">Belongs to the MATALPHA1 family.</text>
</comment>
<dbReference type="EMBL" id="AB011379">
    <property type="protein sequence ID" value="BAA75910.1"/>
    <property type="molecule type" value="Genomic_DNA"/>
</dbReference>
<dbReference type="VEuPathDB" id="FungiDB:FOIG_12014"/>
<dbReference type="VEuPathDB" id="FungiDB:FOXG_03616"/>
<dbReference type="VEuPathDB" id="FungiDB:HZS61_015702"/>
<dbReference type="GO" id="GO:0005634">
    <property type="term" value="C:nucleus"/>
    <property type="evidence" value="ECO:0007669"/>
    <property type="project" value="UniProtKB-SubCell"/>
</dbReference>
<dbReference type="GO" id="GO:0008301">
    <property type="term" value="F:DNA binding, bending"/>
    <property type="evidence" value="ECO:0007669"/>
    <property type="project" value="InterPro"/>
</dbReference>
<dbReference type="GO" id="GO:0045895">
    <property type="term" value="P:positive regulation of mating-type specific transcription, DNA-templated"/>
    <property type="evidence" value="ECO:0007669"/>
    <property type="project" value="InterPro"/>
</dbReference>
<dbReference type="InterPro" id="IPR006856">
    <property type="entry name" value="MATalpha_HMGbox"/>
</dbReference>
<dbReference type="Pfam" id="PF04769">
    <property type="entry name" value="MATalpha_HMGbox"/>
    <property type="match status" value="1"/>
</dbReference>
<dbReference type="PROSITE" id="PS51325">
    <property type="entry name" value="ALPHA_BOX"/>
    <property type="match status" value="1"/>
</dbReference>
<feature type="chain" id="PRO_0000206015" description="Mating-type protein MAT-1">
    <location>
        <begin position="1"/>
        <end position="357"/>
    </location>
</feature>
<feature type="DNA-binding region" description="Alpha box" evidence="2">
    <location>
        <begin position="53"/>
        <end position="108"/>
    </location>
</feature>
<sequence length="357" mass="40283">MRAVSQTSPNRLAEALSSPHMLKEMLDLFGHEYLPVFEGEIKPHGPLGTSDSRAKRPLNAFMAFRTYYLKLFPDTQQKNASGFLTQLWGGDPHRNKWALIAKVYSFLRDQLGKGPVNLSAFLGIACPLMNMVEPSIYIEVLGWEQTAPQGIVTFQQNTDIMKANLARLFNVHPTTEIDLLTSILSAGYFTDFSQVLLMRMWACQNGIMTTTSATAGNNVATTQPLYESVPTTAEKVSFINAVRESRNLAAHDLFGPEYDAAFFGNRFVHSWEVQDLTSFQNVQISVADSPMESNTLYNFRMPSQCLPQVSEFDLYDVIDTSIIDISSAWSIDQYLHEKQSKMQQQCKYFLFRNSDCS</sequence>
<proteinExistence type="inferred from homology"/>
<organism>
    <name type="scientific">Fusarium oxysporum</name>
    <name type="common">Fusarium vascular wilt</name>
    <dbReference type="NCBI Taxonomy" id="5507"/>
    <lineage>
        <taxon>Eukaryota</taxon>
        <taxon>Fungi</taxon>
        <taxon>Dikarya</taxon>
        <taxon>Ascomycota</taxon>
        <taxon>Pezizomycotina</taxon>
        <taxon>Sordariomycetes</taxon>
        <taxon>Hypocreomycetidae</taxon>
        <taxon>Hypocreales</taxon>
        <taxon>Nectriaceae</taxon>
        <taxon>Fusarium</taxon>
        <taxon>Fusarium oxysporum species complex</taxon>
    </lineage>
</organism>
<accession>O59851</accession>
<gene>
    <name type="primary">MAT1</name>
</gene>
<evidence type="ECO:0000250" key="1">
    <source>
        <dbReference type="UniProtKB" id="P0CY06"/>
    </source>
</evidence>
<evidence type="ECO:0000255" key="2">
    <source>
        <dbReference type="PROSITE-ProRule" id="PRU00655"/>
    </source>
</evidence>
<reference key="1">
    <citation type="journal article" date="2000" name="Mol. Plant Microbe Interact.">
        <title>Mating-type genes from asexual phytopathogenic ascomycetes Fusarium oxysporum and Alternaria alternata.</title>
        <authorList>
            <person name="Arie T."/>
            <person name="Kaneko I."/>
            <person name="Yoshida T."/>
            <person name="Noguchi M."/>
            <person name="Nomura Y."/>
            <person name="Yamaguchi I."/>
        </authorList>
    </citation>
    <scope>NUCLEOTIDE SEQUENCE [GENOMIC DNA]</scope>
    <source>
        <strain>880621a-1 / Race2</strain>
    </source>
</reference>